<feature type="chain" id="PRO_0000197043" description="Uncharacterized protein outside the virF region">
    <location>
        <begin position="1"/>
        <end position="150"/>
    </location>
</feature>
<dbReference type="EMBL" id="X13981">
    <property type="protein sequence ID" value="CAA32162.1"/>
    <property type="molecule type" value="Genomic_DNA"/>
</dbReference>
<dbReference type="PIR" id="S15914">
    <property type="entry name" value="S15914"/>
</dbReference>
<geneLocation type="plasmid">
    <name>pTi15955</name>
</geneLocation>
<name>YVF3_AGRT9</name>
<reference key="1">
    <citation type="journal article" date="1990" name="Plant Mol. Biol.">
        <title>Octopine and nopaline strains of Agrobacterium tumefaciens differ in virulence; molecular characterization of the virF locus.</title>
        <authorList>
            <person name="Melchers L.S."/>
            <person name="Maroney M.J."/>
            <person name="den Dulk-Ras A."/>
            <person name="Thompson D.V."/>
            <person name="van Vuuren H.A.J."/>
            <person name="Schilperoort R.A."/>
            <person name="Hooykaas P.J.J."/>
        </authorList>
    </citation>
    <scope>NUCLEOTIDE SEQUENCE [GENOMIC DNA]</scope>
</reference>
<proteinExistence type="predicted"/>
<keyword id="KW-0614">Plasmid</keyword>
<organism>
    <name type="scientific">Agrobacterium tumefaciens (strain 15955)</name>
    <dbReference type="NCBI Taxonomy" id="190386"/>
    <lineage>
        <taxon>Bacteria</taxon>
        <taxon>Pseudomonadati</taxon>
        <taxon>Pseudomonadota</taxon>
        <taxon>Alphaproteobacteria</taxon>
        <taxon>Hyphomicrobiales</taxon>
        <taxon>Rhizobiaceae</taxon>
        <taxon>Rhizobium/Agrobacterium group</taxon>
        <taxon>Agrobacterium</taxon>
        <taxon>Agrobacterium tumefaciens complex</taxon>
    </lineage>
</organism>
<evidence type="ECO:0000305" key="1"/>
<comment type="similarity">
    <text evidence="1">To A.tumefaciens conjugal transfer protein TraB.</text>
</comment>
<protein>
    <recommendedName>
        <fullName>Uncharacterized protein outside the virF region</fullName>
    </recommendedName>
    <alternativeName>
        <fullName>ORF3</fullName>
    </alternativeName>
</protein>
<sequence length="150" mass="16633">MARCSCLIPAAWFRRIICSFTPPLRAPMIVDILVRFRIPVFSAWRGPCSPSTRDRGDDHLADRWKSVLLIIASIACGWIGWSGEVLLLPPAMFFPLLWAMAPSRTIATLVAVGYFLAACRGLPQGVANFYATDLWPRLVLWAVASVSVND</sequence>
<accession>P15596</accession>